<sequence>MAKKVMKLVKLQIPAGKANPAPPVGPALGQAGVNIMGFCKEFNARTQDQAGLIIPVVITVFEDRSFTFITKTPPAAVLLKKAAGIESGSGEPNRKKVATVKRDKVREIAETKMPDLNAASVETAMLMVEGTARSMGIVIED</sequence>
<name>RL11_EXIS2</name>
<comment type="function">
    <text evidence="1">Forms part of the ribosomal stalk which helps the ribosome interact with GTP-bound translation factors.</text>
</comment>
<comment type="subunit">
    <text evidence="1">Part of the ribosomal stalk of the 50S ribosomal subunit. Interacts with L10 and the large rRNA to form the base of the stalk. L10 forms an elongated spine to which L12 dimers bind in a sequential fashion forming a multimeric L10(L12)X complex.</text>
</comment>
<comment type="PTM">
    <text evidence="1">One or more lysine residues are methylated.</text>
</comment>
<comment type="similarity">
    <text evidence="1">Belongs to the universal ribosomal protein uL11 family.</text>
</comment>
<proteinExistence type="inferred from homology"/>
<gene>
    <name evidence="1" type="primary">rplK</name>
    <name type="ordered locus">Exig_0083</name>
</gene>
<dbReference type="EMBL" id="CP001022">
    <property type="protein sequence ID" value="ACB59570.1"/>
    <property type="molecule type" value="Genomic_DNA"/>
</dbReference>
<dbReference type="SMR" id="B1YGT7"/>
<dbReference type="STRING" id="262543.Exig_0083"/>
<dbReference type="KEGG" id="esi:Exig_0083"/>
<dbReference type="eggNOG" id="COG0080">
    <property type="taxonomic scope" value="Bacteria"/>
</dbReference>
<dbReference type="HOGENOM" id="CLU_074237_2_1_9"/>
<dbReference type="OrthoDB" id="9802408at2"/>
<dbReference type="Proteomes" id="UP000001681">
    <property type="component" value="Chromosome"/>
</dbReference>
<dbReference type="GO" id="GO:0022625">
    <property type="term" value="C:cytosolic large ribosomal subunit"/>
    <property type="evidence" value="ECO:0007669"/>
    <property type="project" value="TreeGrafter"/>
</dbReference>
<dbReference type="GO" id="GO:0070180">
    <property type="term" value="F:large ribosomal subunit rRNA binding"/>
    <property type="evidence" value="ECO:0007669"/>
    <property type="project" value="UniProtKB-UniRule"/>
</dbReference>
<dbReference type="GO" id="GO:0003735">
    <property type="term" value="F:structural constituent of ribosome"/>
    <property type="evidence" value="ECO:0007669"/>
    <property type="project" value="InterPro"/>
</dbReference>
<dbReference type="GO" id="GO:0006412">
    <property type="term" value="P:translation"/>
    <property type="evidence" value="ECO:0007669"/>
    <property type="project" value="UniProtKB-UniRule"/>
</dbReference>
<dbReference type="CDD" id="cd00349">
    <property type="entry name" value="Ribosomal_L11"/>
    <property type="match status" value="1"/>
</dbReference>
<dbReference type="FunFam" id="1.10.10.250:FF:000001">
    <property type="entry name" value="50S ribosomal protein L11"/>
    <property type="match status" value="1"/>
</dbReference>
<dbReference type="FunFam" id="3.30.1550.10:FF:000001">
    <property type="entry name" value="50S ribosomal protein L11"/>
    <property type="match status" value="1"/>
</dbReference>
<dbReference type="Gene3D" id="1.10.10.250">
    <property type="entry name" value="Ribosomal protein L11, C-terminal domain"/>
    <property type="match status" value="1"/>
</dbReference>
<dbReference type="Gene3D" id="3.30.1550.10">
    <property type="entry name" value="Ribosomal protein L11/L12, N-terminal domain"/>
    <property type="match status" value="1"/>
</dbReference>
<dbReference type="HAMAP" id="MF_00736">
    <property type="entry name" value="Ribosomal_uL11"/>
    <property type="match status" value="1"/>
</dbReference>
<dbReference type="InterPro" id="IPR000911">
    <property type="entry name" value="Ribosomal_uL11"/>
</dbReference>
<dbReference type="InterPro" id="IPR006519">
    <property type="entry name" value="Ribosomal_uL11_bac-typ"/>
</dbReference>
<dbReference type="InterPro" id="IPR020783">
    <property type="entry name" value="Ribosomal_uL11_C"/>
</dbReference>
<dbReference type="InterPro" id="IPR036769">
    <property type="entry name" value="Ribosomal_uL11_C_sf"/>
</dbReference>
<dbReference type="InterPro" id="IPR020784">
    <property type="entry name" value="Ribosomal_uL11_N"/>
</dbReference>
<dbReference type="InterPro" id="IPR036796">
    <property type="entry name" value="Ribosomal_uL11_N_sf"/>
</dbReference>
<dbReference type="NCBIfam" id="TIGR01632">
    <property type="entry name" value="L11_bact"/>
    <property type="match status" value="1"/>
</dbReference>
<dbReference type="PANTHER" id="PTHR11661">
    <property type="entry name" value="60S RIBOSOMAL PROTEIN L12"/>
    <property type="match status" value="1"/>
</dbReference>
<dbReference type="PANTHER" id="PTHR11661:SF1">
    <property type="entry name" value="LARGE RIBOSOMAL SUBUNIT PROTEIN UL11M"/>
    <property type="match status" value="1"/>
</dbReference>
<dbReference type="Pfam" id="PF00298">
    <property type="entry name" value="Ribosomal_L11"/>
    <property type="match status" value="1"/>
</dbReference>
<dbReference type="Pfam" id="PF03946">
    <property type="entry name" value="Ribosomal_L11_N"/>
    <property type="match status" value="1"/>
</dbReference>
<dbReference type="SMART" id="SM00649">
    <property type="entry name" value="RL11"/>
    <property type="match status" value="1"/>
</dbReference>
<dbReference type="SUPFAM" id="SSF54747">
    <property type="entry name" value="Ribosomal L11/L12e N-terminal domain"/>
    <property type="match status" value="1"/>
</dbReference>
<dbReference type="SUPFAM" id="SSF46906">
    <property type="entry name" value="Ribosomal protein L11, C-terminal domain"/>
    <property type="match status" value="1"/>
</dbReference>
<evidence type="ECO:0000255" key="1">
    <source>
        <dbReference type="HAMAP-Rule" id="MF_00736"/>
    </source>
</evidence>
<evidence type="ECO:0000305" key="2"/>
<accession>B1YGT7</accession>
<keyword id="KW-0488">Methylation</keyword>
<keyword id="KW-1185">Reference proteome</keyword>
<keyword id="KW-0687">Ribonucleoprotein</keyword>
<keyword id="KW-0689">Ribosomal protein</keyword>
<keyword id="KW-0694">RNA-binding</keyword>
<keyword id="KW-0699">rRNA-binding</keyword>
<protein>
    <recommendedName>
        <fullName evidence="1">Large ribosomal subunit protein uL11</fullName>
    </recommendedName>
    <alternativeName>
        <fullName evidence="2">50S ribosomal protein L11</fullName>
    </alternativeName>
</protein>
<organism>
    <name type="scientific">Exiguobacterium sibiricum (strain DSM 17290 / CCUG 55495 / CIP 109462 / JCM 13490 / 255-15)</name>
    <dbReference type="NCBI Taxonomy" id="262543"/>
    <lineage>
        <taxon>Bacteria</taxon>
        <taxon>Bacillati</taxon>
        <taxon>Bacillota</taxon>
        <taxon>Bacilli</taxon>
        <taxon>Bacillales</taxon>
        <taxon>Bacillales Family XII. Incertae Sedis</taxon>
        <taxon>Exiguobacterium</taxon>
    </lineage>
</organism>
<feature type="chain" id="PRO_1000195639" description="Large ribosomal subunit protein uL11">
    <location>
        <begin position="1"/>
        <end position="141"/>
    </location>
</feature>
<reference key="1">
    <citation type="submission" date="2008-04" db="EMBL/GenBank/DDBJ databases">
        <title>Complete sequence of chromosome of Exiguobacterium sibiricum 255-15.</title>
        <authorList>
            <consortium name="US DOE Joint Genome Institute"/>
            <person name="Copeland A."/>
            <person name="Lucas S."/>
            <person name="Lapidus A."/>
            <person name="Glavina del Rio T."/>
            <person name="Dalin E."/>
            <person name="Tice H."/>
            <person name="Bruce D."/>
            <person name="Goodwin L."/>
            <person name="Pitluck S."/>
            <person name="Kiss H."/>
            <person name="Chertkov O."/>
            <person name="Monk C."/>
            <person name="Brettin T."/>
            <person name="Detter J.C."/>
            <person name="Han C."/>
            <person name="Kuske C.R."/>
            <person name="Schmutz J."/>
            <person name="Larimer F."/>
            <person name="Land M."/>
            <person name="Hauser L."/>
            <person name="Kyrpides N."/>
            <person name="Mikhailova N."/>
            <person name="Vishnivetskaya T."/>
            <person name="Rodrigues D.F."/>
            <person name="Gilichinsky D."/>
            <person name="Tiedje J."/>
            <person name="Richardson P."/>
        </authorList>
    </citation>
    <scope>NUCLEOTIDE SEQUENCE [LARGE SCALE GENOMIC DNA]</scope>
    <source>
        <strain>DSM 17290 / CCUG 55495 / CIP 109462 / JCM 13490 / 255-15</strain>
    </source>
</reference>